<protein>
    <recommendedName>
        <fullName>tRNA wybutosine-synthesizing protein 4</fullName>
        <shortName>tRNA yW-synthesizing protein 4</shortName>
        <ecNumber>2.1.1.290</ecNumber>
        <ecNumber>2.3.1.231</ecNumber>
    </recommendedName>
    <alternativeName>
        <fullName>Leucine carboxyl methyltransferase 2</fullName>
    </alternativeName>
    <alternativeName>
        <fullName>tRNA(Phe) (7-(3-amino-3-(methoxycarbonyl)propyl)wyosine(37)-N)-methoxycarbonyltransferase</fullName>
    </alternativeName>
    <alternativeName>
        <fullName>tRNA(Phe) (7-(3-amino-3-carboxypropyl)wyosine(37)-O)-methyltransferase</fullName>
    </alternativeName>
</protein>
<comment type="function">
    <text evidence="1">Probable S-adenosyl-L-methionine-dependent methyltransferase that acts as a component of the wybutosine biosynthesis pathway. Wybutosine is a hyper modified guanosine with a tricyclic base found at the 3'-position adjacent to the anticodon of eukaryotic phenylalanine tRNA (By similarity). May methylate the carboxyl group of leucine residues to form alpha-leucine ester residues.</text>
</comment>
<comment type="catalytic activity">
    <reaction>
        <text>7-[(3S)-3-amino-3-carboxypropyl]wyosine(37) in tRNA(Phe) + S-adenosyl-L-methionine = 7-[(3S)-(3-amino-3-methoxycarbonyl)propyl]wyosine(37) in tRNA(Phe) + S-adenosyl-L-homocysteine</text>
        <dbReference type="Rhea" id="RHEA:36903"/>
        <dbReference type="Rhea" id="RHEA-COMP:10379"/>
        <dbReference type="Rhea" id="RHEA-COMP:11844"/>
        <dbReference type="ChEBI" id="CHEBI:57856"/>
        <dbReference type="ChEBI" id="CHEBI:59789"/>
        <dbReference type="ChEBI" id="CHEBI:73543"/>
        <dbReference type="ChEBI" id="CHEBI:74275"/>
        <dbReference type="EC" id="2.1.1.290"/>
    </reaction>
</comment>
<comment type="catalytic activity">
    <reaction>
        <text>7-[(3S)-(3-amino-3-methoxycarbonyl)propyl]wyosine(37) in tRNA(Phe) + S-adenosyl-L-methionine + CO2 = wybutosine(37) in tRNA(Phe) + S-adenosyl-L-homocysteine + 2 H(+)</text>
        <dbReference type="Rhea" id="RHEA:37119"/>
        <dbReference type="Rhea" id="RHEA-COMP:11844"/>
        <dbReference type="Rhea" id="RHEA-COMP:11847"/>
        <dbReference type="ChEBI" id="CHEBI:15378"/>
        <dbReference type="ChEBI" id="CHEBI:16526"/>
        <dbReference type="ChEBI" id="CHEBI:57856"/>
        <dbReference type="ChEBI" id="CHEBI:59789"/>
        <dbReference type="ChEBI" id="CHEBI:73544"/>
        <dbReference type="ChEBI" id="CHEBI:74275"/>
        <dbReference type="EC" id="2.3.1.231"/>
    </reaction>
</comment>
<comment type="pathway">
    <text>tRNA modification; wybutosine-tRNA(Phe) biosynthesis.</text>
</comment>
<comment type="subunit">
    <text evidence="3">Interacts with RNF144B/IBRDC2.</text>
</comment>
<comment type="interaction">
    <interactant intactId="EBI-11023122">
        <id>O60294</id>
    </interactant>
    <interactant intactId="EBI-351526">
        <id>O43707</id>
        <label>ACTN4</label>
    </interactant>
    <organismsDiffer>false</organismsDiffer>
    <experiments>3</experiments>
</comment>
<comment type="similarity">
    <text evidence="5">Belongs to the methyltransferase superfamily. LCMT family.</text>
</comment>
<comment type="sequence caution" evidence="5">
    <conflict type="erroneous initiation">
        <sequence resource="EMBL-CDS" id="BAA25473"/>
    </conflict>
</comment>
<sequence>MGPRSRERRAGAVQNTNDSSALSKRSLAARGYVQDPFAALLVPGAARRAPLIHRGYYVRARAVRHCVRAFLEQIGAPQAALRAQILSLGAGFDSLYFRLKTAGRLARAAVWEVDFPDVARRKAERIGETPELCALTGPFERGEPASALCFESADYCILGLDLRQLQRVEEALGAAGLDAASPTLLLAEAVLTYLEPESAAALIAWAAQRFPNALFVVYEQMRPQDAFGQFMLQHFRQLNSPLHGLERFPDVEAQRRRFLQAGWTACGAVDMNEFYHCFLPAEERRRVENIEPFDEFEEWHLKCAHYFILAASRGDTLSHTLVFPSSEAFPRVNPASPSGVFPASVVSSEGQVPNLKRYGHASVFLSPDVILSAGGFGEQEGRHCRVSQFHLLSRDCDSEWKGSQIGSCGTGVQWDGRLYHTMTRLSESRVLVLGGRLSPVSPALGVLQLHFFKSEDNNTEDLKVTITKAGRKDDSTLCCWRHSTTEVSCQNQEYLFVYGGRSVVEPVLSDWHFLHVGTMAWVRIPVEGEVPEARHSHSACTWQGGALIAGGLGASEEPLNSVLFLRPISCGFLWESVDIQPPITPRYSHTAHVLNGKLLLVGGIWIHSSSFPGVTVINLTTGLSSEYQIDTTYVPWPLMLHNHTSILLPEEQQLLLLGGGGNCFSFGTYFNPHTVTLDLSSLSAGQ</sequence>
<feature type="chain" id="PRO_0000204423" description="tRNA wybutosine-synthesizing protein 4">
    <location>
        <begin position="1"/>
        <end position="686"/>
    </location>
</feature>
<feature type="region of interest" description="Disordered" evidence="2">
    <location>
        <begin position="1"/>
        <end position="21"/>
    </location>
</feature>
<feature type="compositionally biased region" description="Basic and acidic residues" evidence="2">
    <location>
        <begin position="1"/>
        <end position="10"/>
    </location>
</feature>
<feature type="binding site" evidence="1">
    <location>
        <position position="59"/>
    </location>
    <ligand>
        <name>S-adenosyl-L-methionine</name>
        <dbReference type="ChEBI" id="CHEBI:59789"/>
    </ligand>
</feature>
<feature type="binding site" evidence="1">
    <location>
        <position position="89"/>
    </location>
    <ligand>
        <name>S-adenosyl-L-methionine</name>
        <dbReference type="ChEBI" id="CHEBI:59789"/>
    </ligand>
</feature>
<feature type="binding site" evidence="1">
    <location>
        <position position="114"/>
    </location>
    <ligand>
        <name>S-adenosyl-L-methionine</name>
        <dbReference type="ChEBI" id="CHEBI:59789"/>
    </ligand>
</feature>
<feature type="binding site" evidence="1">
    <location>
        <begin position="161"/>
        <end position="162"/>
    </location>
    <ligand>
        <name>S-adenosyl-L-methionine</name>
        <dbReference type="ChEBI" id="CHEBI:59789"/>
    </ligand>
</feature>
<feature type="binding site" evidence="1">
    <location>
        <position position="188"/>
    </location>
    <ligand>
        <name>S-adenosyl-L-methionine</name>
        <dbReference type="ChEBI" id="CHEBI:59789"/>
    </ligand>
</feature>
<feature type="sequence variant" id="VAR_023378" description="In dbSNP:rs45552436." evidence="4">
    <original>V</original>
    <variation>L</variation>
    <location>
        <position position="67"/>
    </location>
</feature>
<feature type="sequence variant" id="VAR_022081" description="In dbSNP:rs3742970." evidence="4">
    <original>R</original>
    <variation>S</variation>
    <location>
        <position position="141"/>
    </location>
</feature>
<feature type="sequence variant" id="VAR_023379" description="In dbSNP:rs45593931." evidence="4">
    <original>C</original>
    <variation>Y</variation>
    <location>
        <position position="149"/>
    </location>
</feature>
<feature type="sequence variant" id="VAR_023380" description="In dbSNP:rs45530831." evidence="4">
    <original>T</original>
    <variation>A</variation>
    <location>
        <position position="518"/>
    </location>
</feature>
<feature type="sequence conflict" description="In Ref. 4; AAF75774." evidence="5" ref="4">
    <original>QL</original>
    <variation>HV</variation>
    <location>
        <begin position="164"/>
        <end position="165"/>
    </location>
</feature>
<feature type="sequence conflict" description="In Ref. 4; AAF75774." evidence="5" ref="4">
    <original>L</original>
    <variation>F</variation>
    <location>
        <position position="202"/>
    </location>
</feature>
<feature type="sequence conflict" description="In Ref. 1; BAA25473." evidence="5" ref="1">
    <original>M</original>
    <variation>I</variation>
    <location>
        <position position="271"/>
    </location>
</feature>
<accession>O60294</accession>
<accession>Q4JFT6</accession>
<accession>Q96B55</accession>
<accession>Q9NR10</accession>
<name>TYW4_HUMAN</name>
<organism>
    <name type="scientific">Homo sapiens</name>
    <name type="common">Human</name>
    <dbReference type="NCBI Taxonomy" id="9606"/>
    <lineage>
        <taxon>Eukaryota</taxon>
        <taxon>Metazoa</taxon>
        <taxon>Chordata</taxon>
        <taxon>Craniata</taxon>
        <taxon>Vertebrata</taxon>
        <taxon>Euteleostomi</taxon>
        <taxon>Mammalia</taxon>
        <taxon>Eutheria</taxon>
        <taxon>Euarchontoglires</taxon>
        <taxon>Primates</taxon>
        <taxon>Haplorrhini</taxon>
        <taxon>Catarrhini</taxon>
        <taxon>Hominidae</taxon>
        <taxon>Homo</taxon>
    </lineage>
</organism>
<keyword id="KW-0489">Methyltransferase</keyword>
<keyword id="KW-1267">Proteomics identification</keyword>
<keyword id="KW-1185">Reference proteome</keyword>
<keyword id="KW-0949">S-adenosyl-L-methionine</keyword>
<keyword id="KW-0808">Transferase</keyword>
<keyword id="KW-0819">tRNA processing</keyword>
<gene>
    <name type="primary">LCMT2</name>
    <name type="synonym">KIAA0547</name>
    <name type="synonym">TYW4</name>
</gene>
<evidence type="ECO:0000250" key="1"/>
<evidence type="ECO:0000256" key="2">
    <source>
        <dbReference type="SAM" id="MobiDB-lite"/>
    </source>
</evidence>
<evidence type="ECO:0000269" key="3">
    <source>
    </source>
</evidence>
<evidence type="ECO:0000269" key="4">
    <source ref="2"/>
</evidence>
<evidence type="ECO:0000305" key="5"/>
<proteinExistence type="evidence at protein level"/>
<dbReference type="EC" id="2.1.1.290"/>
<dbReference type="EC" id="2.3.1.231"/>
<dbReference type="EMBL" id="AB011119">
    <property type="protein sequence ID" value="BAA25473.2"/>
    <property type="status" value="ALT_INIT"/>
    <property type="molecule type" value="mRNA"/>
</dbReference>
<dbReference type="EMBL" id="DQ102852">
    <property type="protein sequence ID" value="AAY88744.1"/>
    <property type="molecule type" value="Genomic_DNA"/>
</dbReference>
<dbReference type="EMBL" id="BC015949">
    <property type="protein sequence ID" value="AAH15949.1"/>
    <property type="molecule type" value="mRNA"/>
</dbReference>
<dbReference type="EMBL" id="AF265443">
    <property type="protein sequence ID" value="AAF75774.1"/>
    <property type="molecule type" value="mRNA"/>
</dbReference>
<dbReference type="CCDS" id="CCDS10094.1"/>
<dbReference type="RefSeq" id="NP_055608.2">
    <property type="nucleotide sequence ID" value="NM_014793.4"/>
</dbReference>
<dbReference type="SMR" id="O60294"/>
<dbReference type="BioGRID" id="115173">
    <property type="interactions" value="37"/>
</dbReference>
<dbReference type="FunCoup" id="O60294">
    <property type="interactions" value="806"/>
</dbReference>
<dbReference type="IntAct" id="O60294">
    <property type="interactions" value="20"/>
</dbReference>
<dbReference type="STRING" id="9606.ENSP00000307214"/>
<dbReference type="DrugBank" id="DB00149">
    <property type="generic name" value="Leucine"/>
</dbReference>
<dbReference type="GlyGen" id="O60294">
    <property type="glycosylation" value="1 site, 1 O-linked glycan (1 site)"/>
</dbReference>
<dbReference type="iPTMnet" id="O60294"/>
<dbReference type="PhosphoSitePlus" id="O60294"/>
<dbReference type="BioMuta" id="LCMT2"/>
<dbReference type="jPOST" id="O60294"/>
<dbReference type="MassIVE" id="O60294"/>
<dbReference type="PaxDb" id="9606-ENSP00000307214"/>
<dbReference type="PeptideAtlas" id="O60294"/>
<dbReference type="ProteomicsDB" id="49327"/>
<dbReference type="Pumba" id="O60294"/>
<dbReference type="TopDownProteomics" id="O60294"/>
<dbReference type="Antibodypedia" id="11180">
    <property type="antibodies" value="102 antibodies from 25 providers"/>
</dbReference>
<dbReference type="DNASU" id="9836"/>
<dbReference type="Ensembl" id="ENST00000305641.7">
    <property type="protein sequence ID" value="ENSP00000307214.5"/>
    <property type="gene ID" value="ENSG00000168806.8"/>
</dbReference>
<dbReference type="GeneID" id="9836"/>
<dbReference type="KEGG" id="hsa:9836"/>
<dbReference type="MANE-Select" id="ENST00000305641.7">
    <property type="protein sequence ID" value="ENSP00000307214.5"/>
    <property type="RefSeq nucleotide sequence ID" value="NM_014793.5"/>
    <property type="RefSeq protein sequence ID" value="NP_055608.2"/>
</dbReference>
<dbReference type="UCSC" id="uc001zrg.4">
    <property type="organism name" value="human"/>
</dbReference>
<dbReference type="AGR" id="HGNC:17558"/>
<dbReference type="CTD" id="9836"/>
<dbReference type="DisGeNET" id="9836"/>
<dbReference type="GeneCards" id="LCMT2"/>
<dbReference type="HGNC" id="HGNC:17558">
    <property type="gene designation" value="LCMT2"/>
</dbReference>
<dbReference type="HPA" id="ENSG00000168806">
    <property type="expression patterns" value="Low tissue specificity"/>
</dbReference>
<dbReference type="MIM" id="611246">
    <property type="type" value="gene"/>
</dbReference>
<dbReference type="neXtProt" id="NX_O60294"/>
<dbReference type="OpenTargets" id="ENSG00000168806"/>
<dbReference type="PharmGKB" id="PA134878443"/>
<dbReference type="VEuPathDB" id="HostDB:ENSG00000168806"/>
<dbReference type="eggNOG" id="KOG2918">
    <property type="taxonomic scope" value="Eukaryota"/>
</dbReference>
<dbReference type="GeneTree" id="ENSGT00940000162599"/>
<dbReference type="HOGENOM" id="CLU_002761_2_0_1"/>
<dbReference type="InParanoid" id="O60294"/>
<dbReference type="OMA" id="FCILEQF"/>
<dbReference type="OrthoDB" id="203237at2759"/>
<dbReference type="PAN-GO" id="O60294">
    <property type="GO annotations" value="3 GO annotations based on evolutionary models"/>
</dbReference>
<dbReference type="PhylomeDB" id="O60294"/>
<dbReference type="TreeFam" id="TF315087"/>
<dbReference type="PathwayCommons" id="O60294"/>
<dbReference type="Reactome" id="R-HSA-6782861">
    <property type="pathway name" value="Synthesis of wybutosine at G37 of tRNA(Phe)"/>
</dbReference>
<dbReference type="SignaLink" id="O60294"/>
<dbReference type="UniPathway" id="UPA00375"/>
<dbReference type="BioGRID-ORCS" id="9836">
    <property type="hits" value="21 hits in 1151 CRISPR screens"/>
</dbReference>
<dbReference type="GeneWiki" id="LCMT2"/>
<dbReference type="GenomeRNAi" id="9836"/>
<dbReference type="Pharos" id="O60294">
    <property type="development level" value="Tbio"/>
</dbReference>
<dbReference type="PRO" id="PR:O60294"/>
<dbReference type="Proteomes" id="UP000005640">
    <property type="component" value="Chromosome 15"/>
</dbReference>
<dbReference type="RNAct" id="O60294">
    <property type="molecule type" value="protein"/>
</dbReference>
<dbReference type="Bgee" id="ENSG00000168806">
    <property type="expression patterns" value="Expressed in hair follicle and 190 other cell types or tissues"/>
</dbReference>
<dbReference type="ExpressionAtlas" id="O60294">
    <property type="expression patterns" value="baseline and differential"/>
</dbReference>
<dbReference type="GO" id="GO:0005737">
    <property type="term" value="C:cytoplasm"/>
    <property type="evidence" value="ECO:0000304"/>
    <property type="project" value="Reactome"/>
</dbReference>
<dbReference type="GO" id="GO:0008175">
    <property type="term" value="F:tRNA methyltransferase activity"/>
    <property type="evidence" value="ECO:0000318"/>
    <property type="project" value="GO_Central"/>
</dbReference>
<dbReference type="GO" id="GO:0030488">
    <property type="term" value="P:tRNA methylation"/>
    <property type="evidence" value="ECO:0000318"/>
    <property type="project" value="GO_Central"/>
</dbReference>
<dbReference type="GO" id="GO:0006400">
    <property type="term" value="P:tRNA modification"/>
    <property type="evidence" value="ECO:0000304"/>
    <property type="project" value="Reactome"/>
</dbReference>
<dbReference type="GO" id="GO:0031591">
    <property type="term" value="P:wybutosine biosynthetic process"/>
    <property type="evidence" value="ECO:0000318"/>
    <property type="project" value="GO_Central"/>
</dbReference>
<dbReference type="FunFam" id="2.120.10.80:FF:000084">
    <property type="entry name" value="Leucine carboxyl methyltransferase 2"/>
    <property type="match status" value="1"/>
</dbReference>
<dbReference type="FunFam" id="3.40.50.150:FF:000207">
    <property type="entry name" value="Leucine carboxyl methyltransferase 2"/>
    <property type="match status" value="1"/>
</dbReference>
<dbReference type="Gene3D" id="2.120.10.80">
    <property type="entry name" value="Kelch-type beta propeller"/>
    <property type="match status" value="1"/>
</dbReference>
<dbReference type="Gene3D" id="3.40.50.150">
    <property type="entry name" value="Vaccinia Virus protein VP39"/>
    <property type="match status" value="1"/>
</dbReference>
<dbReference type="InterPro" id="IPR015915">
    <property type="entry name" value="Kelch-typ_b-propeller"/>
</dbReference>
<dbReference type="InterPro" id="IPR007213">
    <property type="entry name" value="Ppm1/Ppm2/Tcmp"/>
</dbReference>
<dbReference type="InterPro" id="IPR029063">
    <property type="entry name" value="SAM-dependent_MTases_sf"/>
</dbReference>
<dbReference type="PANTHER" id="PTHR46529">
    <property type="entry name" value="TRNA WYBUTOSINE-SYNTHESIZING PROTEIN 4"/>
    <property type="match status" value="1"/>
</dbReference>
<dbReference type="PANTHER" id="PTHR46529:SF1">
    <property type="entry name" value="TRNA WYBUTOSINE-SYNTHESIZING PROTEIN 4"/>
    <property type="match status" value="1"/>
</dbReference>
<dbReference type="Pfam" id="PF24681">
    <property type="entry name" value="Kelch_KLHDC2_KLHL20_DRC7"/>
    <property type="match status" value="1"/>
</dbReference>
<dbReference type="Pfam" id="PF04072">
    <property type="entry name" value="LCM"/>
    <property type="match status" value="1"/>
</dbReference>
<dbReference type="SUPFAM" id="SSF117281">
    <property type="entry name" value="Kelch motif"/>
    <property type="match status" value="1"/>
</dbReference>
<dbReference type="SUPFAM" id="SSF53335">
    <property type="entry name" value="S-adenosyl-L-methionine-dependent methyltransferases"/>
    <property type="match status" value="1"/>
</dbReference>
<reference key="1">
    <citation type="journal article" date="1998" name="DNA Res.">
        <title>Prediction of the coding sequences of unidentified human genes. IX. The complete sequences of 100 new cDNA clones from brain which can code for large proteins in vitro.</title>
        <authorList>
            <person name="Nagase T."/>
            <person name="Ishikawa K."/>
            <person name="Miyajima N."/>
            <person name="Tanaka A."/>
            <person name="Kotani H."/>
            <person name="Nomura N."/>
            <person name="Ohara O."/>
        </authorList>
    </citation>
    <scope>NUCLEOTIDE SEQUENCE [LARGE SCALE MRNA]</scope>
    <source>
        <tissue>Brain</tissue>
    </source>
</reference>
<reference key="2">
    <citation type="submission" date="2005-06" db="EMBL/GenBank/DDBJ databases">
        <authorList>
            <consortium name="NIEHS SNPs program"/>
        </authorList>
    </citation>
    <scope>NUCLEOTIDE SEQUENCE [GENOMIC DNA]</scope>
    <scope>VARIANTS LEU-67; SER-141; TYR-149 AND ALA-518</scope>
</reference>
<reference key="3">
    <citation type="journal article" date="2004" name="Genome Res.">
        <title>The status, quality, and expansion of the NIH full-length cDNA project: the Mammalian Gene Collection (MGC).</title>
        <authorList>
            <consortium name="The MGC Project Team"/>
        </authorList>
    </citation>
    <scope>NUCLEOTIDE SEQUENCE [LARGE SCALE MRNA]</scope>
    <source>
        <tissue>Skin</tissue>
    </source>
</reference>
<reference key="4">
    <citation type="submission" date="2000-05" db="EMBL/GenBank/DDBJ databases">
        <title>Isolation of genes coding for p21WAF1/CIP1 promoter-interacting proteins using the yeast one-hybrid system.</title>
        <authorList>
            <person name="Li S."/>
            <person name="Zhang B."/>
            <person name="Li X."/>
        </authorList>
    </citation>
    <scope>NUCLEOTIDE SEQUENCE [MRNA] OF 126-686</scope>
</reference>
<reference key="5">
    <citation type="journal article" date="2003" name="Oncogene">
        <title>p53RFP, a p53-inducible RING-finger protein, regulates the stability of p21WAF1.</title>
        <authorList>
            <person name="Ng C.-C."/>
            <person name="Arakawa H."/>
            <person name="Fukuda S."/>
            <person name="Kondoh H."/>
            <person name="Nakamura Y."/>
        </authorList>
    </citation>
    <scope>INTERACTION WITH RNF144B</scope>
</reference>